<sequence length="151" mass="15305">MKLLKVAAFAAIVVSGSALAGVVPQWGGGGNHNGGGNSSGPDSTLSIYQYGSANAALALQSDARKSETTITQSGYGNGADVGQGADNSTIELTQNGFRNNATIDQWNAKNSDITVGQYGGNNAALVNQTASDSSVMVRQVGFGNNATANQY</sequence>
<accession>P0A1E5</accession>
<accession>P55225</accession>
<proteinExistence type="inferred from homology"/>
<name>CSGA_SALTY</name>
<keyword id="KW-0281">Fimbrium</keyword>
<keyword id="KW-1185">Reference proteome</keyword>
<keyword id="KW-0732">Signal</keyword>
<protein>
    <recommendedName>
        <fullName>Major curlin subunit</fullName>
    </recommendedName>
    <alternativeName>
        <fullName>Fimbrin SEF17</fullName>
    </alternativeName>
</protein>
<dbReference type="EMBL" id="AJ002301">
    <property type="protein sequence ID" value="CAA05317.1"/>
    <property type="molecule type" value="Genomic_DNA"/>
</dbReference>
<dbReference type="EMBL" id="AE006468">
    <property type="protein sequence ID" value="AAL20074.1"/>
    <property type="molecule type" value="Genomic_DNA"/>
</dbReference>
<dbReference type="RefSeq" id="NP_460115.1">
    <property type="nucleotide sequence ID" value="NC_003197.2"/>
</dbReference>
<dbReference type="RefSeq" id="WP_000771416.1">
    <property type="nucleotide sequence ID" value="NC_003197.2"/>
</dbReference>
<dbReference type="SMR" id="P0A1E5"/>
<dbReference type="STRING" id="99287.STM1144"/>
<dbReference type="PaxDb" id="99287-STM1144"/>
<dbReference type="DNASU" id="1252662"/>
<dbReference type="GeneID" id="1252662"/>
<dbReference type="GeneID" id="66755549"/>
<dbReference type="KEGG" id="stm:STM1144"/>
<dbReference type="PATRIC" id="fig|99287.12.peg.1211"/>
<dbReference type="HOGENOM" id="CLU_1861613_0_0_6"/>
<dbReference type="OMA" id="MKLWKIV"/>
<dbReference type="PhylomeDB" id="P0A1E5"/>
<dbReference type="BioCyc" id="SENT99287:STM1144-MONOMER"/>
<dbReference type="Proteomes" id="UP000001014">
    <property type="component" value="Chromosome"/>
</dbReference>
<dbReference type="GO" id="GO:0009289">
    <property type="term" value="C:pilus"/>
    <property type="evidence" value="ECO:0007669"/>
    <property type="project" value="UniProtKB-SubCell"/>
</dbReference>
<dbReference type="GO" id="GO:0007155">
    <property type="term" value="P:cell adhesion"/>
    <property type="evidence" value="ECO:0007669"/>
    <property type="project" value="InterPro"/>
</dbReference>
<dbReference type="InterPro" id="IPR009742">
    <property type="entry name" value="Curlin_rpt"/>
</dbReference>
<dbReference type="NCBIfam" id="NF007470">
    <property type="entry name" value="PRK10051.1"/>
    <property type="match status" value="1"/>
</dbReference>
<dbReference type="Pfam" id="PF07012">
    <property type="entry name" value="Curlin_rpt"/>
    <property type="match status" value="4"/>
</dbReference>
<reference key="1">
    <citation type="journal article" date="1998" name="J. Bacteriol.">
        <title>Curli fibers are highly conserved between Salmonella typhimurium and Escherichia coli with respect to operon structure and regulation.</title>
        <authorList>
            <person name="Romling U."/>
            <person name="Bian Z."/>
            <person name="Hammar M."/>
            <person name="Sierralta W.D."/>
            <person name="Normark S."/>
        </authorList>
    </citation>
    <scope>NUCLEOTIDE SEQUENCE [GENOMIC DNA]</scope>
    <source>
        <strain>SR-11</strain>
    </source>
</reference>
<reference key="2">
    <citation type="journal article" date="2001" name="Nature">
        <title>Complete genome sequence of Salmonella enterica serovar Typhimurium LT2.</title>
        <authorList>
            <person name="McClelland M."/>
            <person name="Sanderson K.E."/>
            <person name="Spieth J."/>
            <person name="Clifton S.W."/>
            <person name="Latreille P."/>
            <person name="Courtney L."/>
            <person name="Porwollik S."/>
            <person name="Ali J."/>
            <person name="Dante M."/>
            <person name="Du F."/>
            <person name="Hou S."/>
            <person name="Layman D."/>
            <person name="Leonard S."/>
            <person name="Nguyen C."/>
            <person name="Scott K."/>
            <person name="Holmes A."/>
            <person name="Grewal N."/>
            <person name="Mulvaney E."/>
            <person name="Ryan E."/>
            <person name="Sun H."/>
            <person name="Florea L."/>
            <person name="Miller W."/>
            <person name="Stoneking T."/>
            <person name="Nhan M."/>
            <person name="Waterston R."/>
            <person name="Wilson R.K."/>
        </authorList>
    </citation>
    <scope>NUCLEOTIDE SEQUENCE [LARGE SCALE GENOMIC DNA]</scope>
    <source>
        <strain>LT2 / SGSC1412 / ATCC 700720</strain>
    </source>
</reference>
<comment type="function">
    <text>Curlin is the structural subunit of the curli. Curli are coiled surface structures that assemble preferentially at growth temperatures below 37 degrees Celsius. Curli can bind to fibronectin.</text>
</comment>
<comment type="subcellular location">
    <subcellularLocation>
        <location>Fimbrium</location>
    </subcellularLocation>
    <text>Part of the curli surface structure.</text>
</comment>
<comment type="similarity">
    <text evidence="2">Belongs to the CsgA/CsgB family.</text>
</comment>
<evidence type="ECO:0000250" key="1"/>
<evidence type="ECO:0000305" key="2"/>
<organism>
    <name type="scientific">Salmonella typhimurium (strain LT2 / SGSC1412 / ATCC 700720)</name>
    <dbReference type="NCBI Taxonomy" id="99287"/>
    <lineage>
        <taxon>Bacteria</taxon>
        <taxon>Pseudomonadati</taxon>
        <taxon>Pseudomonadota</taxon>
        <taxon>Gammaproteobacteria</taxon>
        <taxon>Enterobacterales</taxon>
        <taxon>Enterobacteriaceae</taxon>
        <taxon>Salmonella</taxon>
    </lineage>
</organism>
<feature type="signal peptide" evidence="1">
    <location>
        <begin position="1"/>
        <end position="20"/>
    </location>
</feature>
<feature type="chain" id="PRO_0000006373" description="Major curlin subunit">
    <location>
        <begin position="21"/>
        <end position="151"/>
    </location>
</feature>
<gene>
    <name type="primary">csgA</name>
    <name type="synonym">agfA</name>
    <name type="ordered locus">STM1144</name>
</gene>